<gene>
    <name evidence="1" type="primary">gatB</name>
    <name type="ordered locus">LPC_1178</name>
</gene>
<dbReference type="EC" id="6.3.5.-" evidence="1"/>
<dbReference type="EMBL" id="CP000675">
    <property type="protein sequence ID" value="ABQ55143.1"/>
    <property type="molecule type" value="Genomic_DNA"/>
</dbReference>
<dbReference type="RefSeq" id="WP_011946698.1">
    <property type="nucleotide sequence ID" value="NC_009494.2"/>
</dbReference>
<dbReference type="SMR" id="A5ICP3"/>
<dbReference type="KEGG" id="lpc:LPC_1178"/>
<dbReference type="HOGENOM" id="CLU_019240_0_0_6"/>
<dbReference type="GO" id="GO:0050566">
    <property type="term" value="F:asparaginyl-tRNA synthase (glutamine-hydrolyzing) activity"/>
    <property type="evidence" value="ECO:0007669"/>
    <property type="project" value="RHEA"/>
</dbReference>
<dbReference type="GO" id="GO:0005524">
    <property type="term" value="F:ATP binding"/>
    <property type="evidence" value="ECO:0007669"/>
    <property type="project" value="UniProtKB-KW"/>
</dbReference>
<dbReference type="GO" id="GO:0050567">
    <property type="term" value="F:glutaminyl-tRNA synthase (glutamine-hydrolyzing) activity"/>
    <property type="evidence" value="ECO:0007669"/>
    <property type="project" value="UniProtKB-UniRule"/>
</dbReference>
<dbReference type="GO" id="GO:0070681">
    <property type="term" value="P:glutaminyl-tRNAGln biosynthesis via transamidation"/>
    <property type="evidence" value="ECO:0007669"/>
    <property type="project" value="TreeGrafter"/>
</dbReference>
<dbReference type="GO" id="GO:0006412">
    <property type="term" value="P:translation"/>
    <property type="evidence" value="ECO:0007669"/>
    <property type="project" value="UniProtKB-UniRule"/>
</dbReference>
<dbReference type="FunFam" id="1.10.10.410:FF:000001">
    <property type="entry name" value="Aspartyl/glutamyl-tRNA(Asn/Gln) amidotransferase subunit B"/>
    <property type="match status" value="1"/>
</dbReference>
<dbReference type="Gene3D" id="1.10.10.410">
    <property type="match status" value="1"/>
</dbReference>
<dbReference type="HAMAP" id="MF_00121">
    <property type="entry name" value="GatB"/>
    <property type="match status" value="1"/>
</dbReference>
<dbReference type="InterPro" id="IPR017959">
    <property type="entry name" value="Asn/Gln-tRNA_amidoTrfase_suB/E"/>
</dbReference>
<dbReference type="InterPro" id="IPR006075">
    <property type="entry name" value="Asn/Gln-tRNA_Trfase_suB/E_cat"/>
</dbReference>
<dbReference type="InterPro" id="IPR018027">
    <property type="entry name" value="Asn/Gln_amidotransferase"/>
</dbReference>
<dbReference type="InterPro" id="IPR003789">
    <property type="entry name" value="Asn/Gln_tRNA_amidoTrase-B-like"/>
</dbReference>
<dbReference type="InterPro" id="IPR004413">
    <property type="entry name" value="GatB"/>
</dbReference>
<dbReference type="InterPro" id="IPR023168">
    <property type="entry name" value="GatB_Yqey_C_2"/>
</dbReference>
<dbReference type="InterPro" id="IPR017958">
    <property type="entry name" value="Gln-tRNA_amidoTrfase_suB_CS"/>
</dbReference>
<dbReference type="InterPro" id="IPR014746">
    <property type="entry name" value="Gln_synth/guanido_kin_cat_dom"/>
</dbReference>
<dbReference type="NCBIfam" id="TIGR00133">
    <property type="entry name" value="gatB"/>
    <property type="match status" value="1"/>
</dbReference>
<dbReference type="NCBIfam" id="NF004012">
    <property type="entry name" value="PRK05477.1-2"/>
    <property type="match status" value="1"/>
</dbReference>
<dbReference type="NCBIfam" id="NF004014">
    <property type="entry name" value="PRK05477.1-4"/>
    <property type="match status" value="1"/>
</dbReference>
<dbReference type="PANTHER" id="PTHR11659">
    <property type="entry name" value="GLUTAMYL-TRNA GLN AMIDOTRANSFERASE SUBUNIT B MITOCHONDRIAL AND PROKARYOTIC PET112-RELATED"/>
    <property type="match status" value="1"/>
</dbReference>
<dbReference type="PANTHER" id="PTHR11659:SF0">
    <property type="entry name" value="GLUTAMYL-TRNA(GLN) AMIDOTRANSFERASE SUBUNIT B, MITOCHONDRIAL"/>
    <property type="match status" value="1"/>
</dbReference>
<dbReference type="Pfam" id="PF02934">
    <property type="entry name" value="GatB_N"/>
    <property type="match status" value="1"/>
</dbReference>
<dbReference type="Pfam" id="PF02637">
    <property type="entry name" value="GatB_Yqey"/>
    <property type="match status" value="1"/>
</dbReference>
<dbReference type="SMART" id="SM00845">
    <property type="entry name" value="GatB_Yqey"/>
    <property type="match status" value="1"/>
</dbReference>
<dbReference type="SUPFAM" id="SSF89095">
    <property type="entry name" value="GatB/YqeY motif"/>
    <property type="match status" value="1"/>
</dbReference>
<dbReference type="SUPFAM" id="SSF55931">
    <property type="entry name" value="Glutamine synthetase/guanido kinase"/>
    <property type="match status" value="1"/>
</dbReference>
<dbReference type="PROSITE" id="PS01234">
    <property type="entry name" value="GATB"/>
    <property type="match status" value="1"/>
</dbReference>
<feature type="chain" id="PRO_1000015985" description="Aspartyl/glutamyl-tRNA(Asn/Gln) amidotransferase subunit B">
    <location>
        <begin position="1"/>
        <end position="477"/>
    </location>
</feature>
<organism>
    <name type="scientific">Legionella pneumophila (strain Corby)</name>
    <dbReference type="NCBI Taxonomy" id="400673"/>
    <lineage>
        <taxon>Bacteria</taxon>
        <taxon>Pseudomonadati</taxon>
        <taxon>Pseudomonadota</taxon>
        <taxon>Gammaproteobacteria</taxon>
        <taxon>Legionellales</taxon>
        <taxon>Legionellaceae</taxon>
        <taxon>Legionella</taxon>
    </lineage>
</organism>
<comment type="function">
    <text evidence="1">Allows the formation of correctly charged Asn-tRNA(Asn) or Gln-tRNA(Gln) through the transamidation of misacylated Asp-tRNA(Asn) or Glu-tRNA(Gln) in organisms which lack either or both of asparaginyl-tRNA or glutaminyl-tRNA synthetases. The reaction takes place in the presence of glutamine and ATP through an activated phospho-Asp-tRNA(Asn) or phospho-Glu-tRNA(Gln).</text>
</comment>
<comment type="catalytic activity">
    <reaction evidence="1">
        <text>L-glutamyl-tRNA(Gln) + L-glutamine + ATP + H2O = L-glutaminyl-tRNA(Gln) + L-glutamate + ADP + phosphate + H(+)</text>
        <dbReference type="Rhea" id="RHEA:17521"/>
        <dbReference type="Rhea" id="RHEA-COMP:9681"/>
        <dbReference type="Rhea" id="RHEA-COMP:9684"/>
        <dbReference type="ChEBI" id="CHEBI:15377"/>
        <dbReference type="ChEBI" id="CHEBI:15378"/>
        <dbReference type="ChEBI" id="CHEBI:29985"/>
        <dbReference type="ChEBI" id="CHEBI:30616"/>
        <dbReference type="ChEBI" id="CHEBI:43474"/>
        <dbReference type="ChEBI" id="CHEBI:58359"/>
        <dbReference type="ChEBI" id="CHEBI:78520"/>
        <dbReference type="ChEBI" id="CHEBI:78521"/>
        <dbReference type="ChEBI" id="CHEBI:456216"/>
    </reaction>
</comment>
<comment type="catalytic activity">
    <reaction evidence="1">
        <text>L-aspartyl-tRNA(Asn) + L-glutamine + ATP + H2O = L-asparaginyl-tRNA(Asn) + L-glutamate + ADP + phosphate + 2 H(+)</text>
        <dbReference type="Rhea" id="RHEA:14513"/>
        <dbReference type="Rhea" id="RHEA-COMP:9674"/>
        <dbReference type="Rhea" id="RHEA-COMP:9677"/>
        <dbReference type="ChEBI" id="CHEBI:15377"/>
        <dbReference type="ChEBI" id="CHEBI:15378"/>
        <dbReference type="ChEBI" id="CHEBI:29985"/>
        <dbReference type="ChEBI" id="CHEBI:30616"/>
        <dbReference type="ChEBI" id="CHEBI:43474"/>
        <dbReference type="ChEBI" id="CHEBI:58359"/>
        <dbReference type="ChEBI" id="CHEBI:78515"/>
        <dbReference type="ChEBI" id="CHEBI:78516"/>
        <dbReference type="ChEBI" id="CHEBI:456216"/>
    </reaction>
</comment>
<comment type="subunit">
    <text evidence="1">Heterotrimer of A, B and C subunits.</text>
</comment>
<comment type="similarity">
    <text evidence="1">Belongs to the GatB/GatE family. GatB subfamily.</text>
</comment>
<keyword id="KW-0067">ATP-binding</keyword>
<keyword id="KW-0436">Ligase</keyword>
<keyword id="KW-0547">Nucleotide-binding</keyword>
<keyword id="KW-0648">Protein biosynthesis</keyword>
<sequence length="477" mass="53538">MEWDTVIGLEVHAQLKTKSKLFSGASTAFGATPNSQTSFIDAGLPGVLPVLNEQAIIMAIQFGLAIHGTINDLSVFERKNYFYSDLPKGYQISQYQKPIVTNGYLNIQLGNNLEKTVHIARAHLEEDAGKSLHDAHTDYTGIDLNRAGTPLLEIVTTPCLHSAEEAINYLKTLHQLVRFLGICDGNMQEGSFRCDVNLSIKPKGSSVLGTRTELKNLNSFRFIEKAIAFEQARHQDILESGLSVIQETRLYNPDNNTTQAMRGKENENDYRYFPDPDLLPIHIDKEQIEAIKNNLPDLPEAISKELKNTPSLNDEDINFILSSPDTYQYYKKIKSLCPAADKTIINWLKGQYAAFLNEHNLTFETPPISAKTMAAFLSKIHEKKISSSIAKNIFSMLCTGEKDIDAIIEREGYQQQNDNSALEEIVEQIIKQYPEQVTEYKAGKEKLLAFFIGQAMKQTKGKANPEQINLLLKKHLG</sequence>
<reference key="1">
    <citation type="submission" date="2006-11" db="EMBL/GenBank/DDBJ databases">
        <title>Identification and characterization of a new conjugation/ type IVA secretion system (trb/tra) of L. pneumophila Corby localized on a mobile genomic island.</title>
        <authorList>
            <person name="Gloeckner G."/>
            <person name="Albert-Weissenberger C."/>
            <person name="Weinmann E."/>
            <person name="Jacobi S."/>
            <person name="Schunder E."/>
            <person name="Steinert M."/>
            <person name="Buchrieser C."/>
            <person name="Hacker J."/>
            <person name="Heuner K."/>
        </authorList>
    </citation>
    <scope>NUCLEOTIDE SEQUENCE [LARGE SCALE GENOMIC DNA]</scope>
    <source>
        <strain>Corby</strain>
    </source>
</reference>
<name>GATB_LEGPC</name>
<evidence type="ECO:0000255" key="1">
    <source>
        <dbReference type="HAMAP-Rule" id="MF_00121"/>
    </source>
</evidence>
<accession>A5ICP3</accession>
<protein>
    <recommendedName>
        <fullName evidence="1">Aspartyl/glutamyl-tRNA(Asn/Gln) amidotransferase subunit B</fullName>
        <shortName evidence="1">Asp/Glu-ADT subunit B</shortName>
        <ecNumber evidence="1">6.3.5.-</ecNumber>
    </recommendedName>
</protein>
<proteinExistence type="inferred from homology"/>